<dbReference type="EMBL" id="CP000020">
    <property type="protein sequence ID" value="AAW84741.2"/>
    <property type="molecule type" value="Genomic_DNA"/>
</dbReference>
<dbReference type="RefSeq" id="WP_005417241.1">
    <property type="nucleotide sequence ID" value="NZ_CAWLES010000001.1"/>
</dbReference>
<dbReference type="RefSeq" id="YP_203629.2">
    <property type="nucleotide sequence ID" value="NC_006840.2"/>
</dbReference>
<dbReference type="SMR" id="Q5E8A5"/>
<dbReference type="STRING" id="312309.VF_0246"/>
<dbReference type="EnsemblBacteria" id="AAW84741">
    <property type="protein sequence ID" value="AAW84741"/>
    <property type="gene ID" value="VF_0246"/>
</dbReference>
<dbReference type="GeneID" id="56276445"/>
<dbReference type="KEGG" id="vfi:VF_0246"/>
<dbReference type="PATRIC" id="fig|312309.11.peg.242"/>
<dbReference type="eggNOG" id="COG0093">
    <property type="taxonomic scope" value="Bacteria"/>
</dbReference>
<dbReference type="HOGENOM" id="CLU_095071_2_1_6"/>
<dbReference type="OrthoDB" id="9806379at2"/>
<dbReference type="Proteomes" id="UP000000537">
    <property type="component" value="Chromosome I"/>
</dbReference>
<dbReference type="GO" id="GO:0022625">
    <property type="term" value="C:cytosolic large ribosomal subunit"/>
    <property type="evidence" value="ECO:0007669"/>
    <property type="project" value="TreeGrafter"/>
</dbReference>
<dbReference type="GO" id="GO:0070180">
    <property type="term" value="F:large ribosomal subunit rRNA binding"/>
    <property type="evidence" value="ECO:0007669"/>
    <property type="project" value="TreeGrafter"/>
</dbReference>
<dbReference type="GO" id="GO:0003735">
    <property type="term" value="F:structural constituent of ribosome"/>
    <property type="evidence" value="ECO:0007669"/>
    <property type="project" value="InterPro"/>
</dbReference>
<dbReference type="GO" id="GO:0006412">
    <property type="term" value="P:translation"/>
    <property type="evidence" value="ECO:0007669"/>
    <property type="project" value="UniProtKB-UniRule"/>
</dbReference>
<dbReference type="CDD" id="cd00337">
    <property type="entry name" value="Ribosomal_uL14"/>
    <property type="match status" value="1"/>
</dbReference>
<dbReference type="FunFam" id="2.40.150.20:FF:000001">
    <property type="entry name" value="50S ribosomal protein L14"/>
    <property type="match status" value="1"/>
</dbReference>
<dbReference type="Gene3D" id="2.40.150.20">
    <property type="entry name" value="Ribosomal protein L14"/>
    <property type="match status" value="1"/>
</dbReference>
<dbReference type="HAMAP" id="MF_01367">
    <property type="entry name" value="Ribosomal_uL14"/>
    <property type="match status" value="1"/>
</dbReference>
<dbReference type="InterPro" id="IPR000218">
    <property type="entry name" value="Ribosomal_uL14"/>
</dbReference>
<dbReference type="InterPro" id="IPR005745">
    <property type="entry name" value="Ribosomal_uL14_bac-type"/>
</dbReference>
<dbReference type="InterPro" id="IPR019972">
    <property type="entry name" value="Ribosomal_uL14_CS"/>
</dbReference>
<dbReference type="InterPro" id="IPR036853">
    <property type="entry name" value="Ribosomal_uL14_sf"/>
</dbReference>
<dbReference type="NCBIfam" id="TIGR01067">
    <property type="entry name" value="rplN_bact"/>
    <property type="match status" value="1"/>
</dbReference>
<dbReference type="PANTHER" id="PTHR11761">
    <property type="entry name" value="50S/60S RIBOSOMAL PROTEIN L14/L23"/>
    <property type="match status" value="1"/>
</dbReference>
<dbReference type="PANTHER" id="PTHR11761:SF3">
    <property type="entry name" value="LARGE RIBOSOMAL SUBUNIT PROTEIN UL14M"/>
    <property type="match status" value="1"/>
</dbReference>
<dbReference type="Pfam" id="PF00238">
    <property type="entry name" value="Ribosomal_L14"/>
    <property type="match status" value="1"/>
</dbReference>
<dbReference type="SMART" id="SM01374">
    <property type="entry name" value="Ribosomal_L14"/>
    <property type="match status" value="1"/>
</dbReference>
<dbReference type="SUPFAM" id="SSF50193">
    <property type="entry name" value="Ribosomal protein L14"/>
    <property type="match status" value="1"/>
</dbReference>
<dbReference type="PROSITE" id="PS00049">
    <property type="entry name" value="RIBOSOMAL_L14"/>
    <property type="match status" value="1"/>
</dbReference>
<comment type="function">
    <text evidence="1">Binds to 23S rRNA. Forms part of two intersubunit bridges in the 70S ribosome.</text>
</comment>
<comment type="subunit">
    <text evidence="1">Part of the 50S ribosomal subunit. Forms a cluster with proteins L3 and L19. In the 70S ribosome, L14 and L19 interact and together make contacts with the 16S rRNA in bridges B5 and B8.</text>
</comment>
<comment type="similarity">
    <text evidence="1">Belongs to the universal ribosomal protein uL14 family.</text>
</comment>
<keyword id="KW-1185">Reference proteome</keyword>
<keyword id="KW-0687">Ribonucleoprotein</keyword>
<keyword id="KW-0689">Ribosomal protein</keyword>
<keyword id="KW-0694">RNA-binding</keyword>
<keyword id="KW-0699">rRNA-binding</keyword>
<name>RL14_ALIF1</name>
<proteinExistence type="inferred from homology"/>
<protein>
    <recommendedName>
        <fullName evidence="1">Large ribosomal subunit protein uL14</fullName>
    </recommendedName>
    <alternativeName>
        <fullName evidence="2">50S ribosomal protein L14</fullName>
    </alternativeName>
</protein>
<sequence>MIQMQSTLDAADNSGARKVMCIKVLGGSHRRYAHIGDIIKVTVKEAIPRGKVKKGDVLKAVVVRTRKGVRRPDGSIIRFDRNACVLLNDTTEQPVGTRIFGPVTRELRNAKFMKIVSLAPEVL</sequence>
<reference key="1">
    <citation type="journal article" date="2005" name="Proc. Natl. Acad. Sci. U.S.A.">
        <title>Complete genome sequence of Vibrio fischeri: a symbiotic bacterium with pathogenic congeners.</title>
        <authorList>
            <person name="Ruby E.G."/>
            <person name="Urbanowski M."/>
            <person name="Campbell J."/>
            <person name="Dunn A."/>
            <person name="Faini M."/>
            <person name="Gunsalus R."/>
            <person name="Lostroh P."/>
            <person name="Lupp C."/>
            <person name="McCann J."/>
            <person name="Millikan D."/>
            <person name="Schaefer A."/>
            <person name="Stabb E."/>
            <person name="Stevens A."/>
            <person name="Visick K."/>
            <person name="Whistler C."/>
            <person name="Greenberg E.P."/>
        </authorList>
    </citation>
    <scope>NUCLEOTIDE SEQUENCE [LARGE SCALE GENOMIC DNA]</scope>
    <source>
        <strain>ATCC 700601 / ES114</strain>
    </source>
</reference>
<reference key="2">
    <citation type="journal article" date="2008" name="BMC Genomics">
        <title>Comparative genomics-based investigation of resequencing targets in Vibrio fischeri: focus on point miscalls and artefactual expansions.</title>
        <authorList>
            <person name="Mandel M.J."/>
            <person name="Stabb E.V."/>
            <person name="Ruby E.G."/>
        </authorList>
    </citation>
    <scope>SEQUENCE REVISION</scope>
</reference>
<gene>
    <name evidence="1" type="primary">rplN</name>
    <name type="ordered locus">VF_0246</name>
    <name type="ORF">VF0247</name>
</gene>
<organism>
    <name type="scientific">Aliivibrio fischeri (strain ATCC 700601 / ES114)</name>
    <name type="common">Vibrio fischeri</name>
    <dbReference type="NCBI Taxonomy" id="312309"/>
    <lineage>
        <taxon>Bacteria</taxon>
        <taxon>Pseudomonadati</taxon>
        <taxon>Pseudomonadota</taxon>
        <taxon>Gammaproteobacteria</taxon>
        <taxon>Vibrionales</taxon>
        <taxon>Vibrionaceae</taxon>
        <taxon>Aliivibrio</taxon>
    </lineage>
</organism>
<feature type="chain" id="PRO_1000144349" description="Large ribosomal subunit protein uL14">
    <location>
        <begin position="1"/>
        <end position="123"/>
    </location>
</feature>
<evidence type="ECO:0000255" key="1">
    <source>
        <dbReference type="HAMAP-Rule" id="MF_01367"/>
    </source>
</evidence>
<evidence type="ECO:0000305" key="2"/>
<accession>Q5E8A5</accession>